<dbReference type="EMBL" id="AJ271458">
    <property type="protein sequence ID" value="CAC28935.1"/>
    <property type="molecule type" value="mRNA"/>
</dbReference>
<dbReference type="EMBL" id="AK016583">
    <property type="protein sequence ID" value="BAB30322.1"/>
    <property type="molecule type" value="mRNA"/>
</dbReference>
<dbReference type="CCDS" id="CCDS24534.1"/>
<dbReference type="RefSeq" id="NP_075635.1">
    <property type="nucleotide sequence ID" value="NM_023146.3"/>
</dbReference>
<dbReference type="SMR" id="Q99NF8"/>
<dbReference type="FunCoup" id="Q99NF8">
    <property type="interactions" value="2260"/>
</dbReference>
<dbReference type="STRING" id="10090.ENSMUSP00000099879"/>
<dbReference type="iPTMnet" id="Q99NF8"/>
<dbReference type="PhosphoSitePlus" id="Q99NF8"/>
<dbReference type="SwissPalm" id="Q99NF8"/>
<dbReference type="PaxDb" id="10090-ENSMUSP00000099879"/>
<dbReference type="ProteomicsDB" id="253184"/>
<dbReference type="Antibodypedia" id="28854">
    <property type="antibodies" value="124 antibodies from 24 providers"/>
</dbReference>
<dbReference type="DNASU" id="66011"/>
<dbReference type="Ensembl" id="ENSMUST00000102815.10">
    <property type="protein sequence ID" value="ENSMUSP00000099879.4"/>
    <property type="gene ID" value="ENSMUSG00000040594.20"/>
</dbReference>
<dbReference type="GeneID" id="66011"/>
<dbReference type="KEGG" id="mmu:66011"/>
<dbReference type="UCSC" id="uc007ikh.2">
    <property type="organism name" value="mouse"/>
</dbReference>
<dbReference type="AGR" id="MGI:1929706"/>
<dbReference type="CTD" id="64901"/>
<dbReference type="MGI" id="MGI:1929706">
    <property type="gene designation" value="Ranbp17"/>
</dbReference>
<dbReference type="VEuPathDB" id="HostDB:ENSMUSG00000040594"/>
<dbReference type="eggNOG" id="KOG1410">
    <property type="taxonomic scope" value="Eukaryota"/>
</dbReference>
<dbReference type="GeneTree" id="ENSGT00940000153139"/>
<dbReference type="HOGENOM" id="CLU_005409_0_0_1"/>
<dbReference type="InParanoid" id="Q99NF8"/>
<dbReference type="OMA" id="DGNTEPC"/>
<dbReference type="OrthoDB" id="244158at2759"/>
<dbReference type="PhylomeDB" id="Q99NF8"/>
<dbReference type="TreeFam" id="TF314248"/>
<dbReference type="BioGRID-ORCS" id="66011">
    <property type="hits" value="1 hit in 79 CRISPR screens"/>
</dbReference>
<dbReference type="ChiTaRS" id="Ranbp17">
    <property type="organism name" value="mouse"/>
</dbReference>
<dbReference type="PRO" id="PR:Q99NF8"/>
<dbReference type="Proteomes" id="UP000000589">
    <property type="component" value="Chromosome 11"/>
</dbReference>
<dbReference type="RNAct" id="Q99NF8">
    <property type="molecule type" value="protein"/>
</dbReference>
<dbReference type="Bgee" id="ENSMUSG00000040594">
    <property type="expression patterns" value="Expressed in spermatocyte and 89 other cell types or tissues"/>
</dbReference>
<dbReference type="ExpressionAtlas" id="Q99NF8">
    <property type="expression patterns" value="baseline and differential"/>
</dbReference>
<dbReference type="GO" id="GO:0005737">
    <property type="term" value="C:cytoplasm"/>
    <property type="evidence" value="ECO:0007669"/>
    <property type="project" value="UniProtKB-SubCell"/>
</dbReference>
<dbReference type="GO" id="GO:0005643">
    <property type="term" value="C:nuclear pore"/>
    <property type="evidence" value="ECO:0007669"/>
    <property type="project" value="UniProtKB-SubCell"/>
</dbReference>
<dbReference type="GO" id="GO:0005049">
    <property type="term" value="F:nuclear export signal receptor activity"/>
    <property type="evidence" value="ECO:0007669"/>
    <property type="project" value="InterPro"/>
</dbReference>
<dbReference type="GO" id="GO:0031267">
    <property type="term" value="F:small GTPase binding"/>
    <property type="evidence" value="ECO:0000304"/>
    <property type="project" value="MGI"/>
</dbReference>
<dbReference type="GO" id="GO:0006886">
    <property type="term" value="P:intracellular protein transport"/>
    <property type="evidence" value="ECO:0007669"/>
    <property type="project" value="InterPro"/>
</dbReference>
<dbReference type="GO" id="GO:0051028">
    <property type="term" value="P:mRNA transport"/>
    <property type="evidence" value="ECO:0007669"/>
    <property type="project" value="UniProtKB-KW"/>
</dbReference>
<dbReference type="GO" id="GO:0006913">
    <property type="term" value="P:nucleocytoplasmic transport"/>
    <property type="evidence" value="ECO:0000304"/>
    <property type="project" value="MGI"/>
</dbReference>
<dbReference type="FunFam" id="1.25.10.10:FF:000042">
    <property type="entry name" value="exportin-7 isoform X1"/>
    <property type="match status" value="1"/>
</dbReference>
<dbReference type="FunFam" id="1.25.10.10:FF:000059">
    <property type="entry name" value="exportin-7 isoform X2"/>
    <property type="match status" value="1"/>
</dbReference>
<dbReference type="Gene3D" id="1.25.10.10">
    <property type="entry name" value="Leucine-rich Repeat Variant"/>
    <property type="match status" value="2"/>
</dbReference>
<dbReference type="InterPro" id="IPR011989">
    <property type="entry name" value="ARM-like"/>
</dbReference>
<dbReference type="InterPro" id="IPR016024">
    <property type="entry name" value="ARM-type_fold"/>
</dbReference>
<dbReference type="InterPro" id="IPR001494">
    <property type="entry name" value="Importin-beta_N"/>
</dbReference>
<dbReference type="InterPro" id="IPR044189">
    <property type="entry name" value="XPO4/7-like"/>
</dbReference>
<dbReference type="PANTHER" id="PTHR12596">
    <property type="entry name" value="EXPORTIN 4,7-RELATED"/>
    <property type="match status" value="1"/>
</dbReference>
<dbReference type="PANTHER" id="PTHR12596:SF8">
    <property type="entry name" value="RAN-BINDING PROTEIN 17"/>
    <property type="match status" value="1"/>
</dbReference>
<dbReference type="Pfam" id="PF03810">
    <property type="entry name" value="IBN_N"/>
    <property type="match status" value="1"/>
</dbReference>
<dbReference type="SMART" id="SM00913">
    <property type="entry name" value="IBN_N"/>
    <property type="match status" value="1"/>
</dbReference>
<dbReference type="SUPFAM" id="SSF48371">
    <property type="entry name" value="ARM repeat"/>
    <property type="match status" value="1"/>
</dbReference>
<comment type="function">
    <text evidence="1">May function as a nuclear transport receptor.</text>
</comment>
<comment type="subunit">
    <text evidence="1">Binds to nucleoporins and the GTP-bound form of Ran.</text>
</comment>
<comment type="subcellular location">
    <subcellularLocation>
        <location evidence="1">Cytoplasm</location>
    </subcellularLocation>
    <subcellularLocation>
        <location evidence="1">Nucleus</location>
    </subcellularLocation>
    <subcellularLocation>
        <location evidence="1">Nucleus</location>
        <location evidence="1">Nuclear pore complex</location>
    </subcellularLocation>
</comment>
<comment type="tissue specificity">
    <text evidence="3">Highly expressed in primary spermatocytes and very weakly in pancreas.</text>
</comment>
<comment type="similarity">
    <text evidence="4">Belongs to the exportin family.</text>
</comment>
<gene>
    <name type="primary">Ranbp17</name>
</gene>
<proteinExistence type="evidence at protein level"/>
<keyword id="KW-0007">Acetylation</keyword>
<keyword id="KW-0963">Cytoplasm</keyword>
<keyword id="KW-0509">mRNA transport</keyword>
<keyword id="KW-0906">Nuclear pore complex</keyword>
<keyword id="KW-0539">Nucleus</keyword>
<keyword id="KW-0597">Phosphoprotein</keyword>
<keyword id="KW-0653">Protein transport</keyword>
<keyword id="KW-1185">Reference proteome</keyword>
<keyword id="KW-0811">Translocation</keyword>
<keyword id="KW-0813">Transport</keyword>
<protein>
    <recommendedName>
        <fullName>Ran-binding protein 17</fullName>
    </recommendedName>
</protein>
<name>RBP17_MOUSE</name>
<evidence type="ECO:0000250" key="1"/>
<evidence type="ECO:0000250" key="2">
    <source>
        <dbReference type="UniProtKB" id="Q9UIA9"/>
    </source>
</evidence>
<evidence type="ECO:0000269" key="3">
    <source>
    </source>
</evidence>
<evidence type="ECO:0000305" key="4"/>
<reference key="1">
    <citation type="journal article" date="2000" name="Biochem. Biophys. Res. Commun.">
        <title>Identification of a novel putative Ran-binding protein and its close homologue.</title>
        <authorList>
            <person name="Koch P."/>
            <person name="Bohlmann I."/>
            <person name="Schaefer M."/>
            <person name="Hansen-Hagge T.E."/>
            <person name="Kiyoi H."/>
            <person name="Wilda M."/>
            <person name="Hameister H."/>
            <person name="Bartram C.R."/>
            <person name="Janssen J.W.G."/>
        </authorList>
    </citation>
    <scope>NUCLEOTIDE SEQUENCE [MRNA]</scope>
    <scope>SUBCELLULAR LOCATION</scope>
    <scope>TISSUE SPECIFICITY</scope>
    <source>
        <tissue>Testis</tissue>
    </source>
</reference>
<reference key="2">
    <citation type="journal article" date="2005" name="Science">
        <title>The transcriptional landscape of the mammalian genome.</title>
        <authorList>
            <person name="Carninci P."/>
            <person name="Kasukawa T."/>
            <person name="Katayama S."/>
            <person name="Gough J."/>
            <person name="Frith M.C."/>
            <person name="Maeda N."/>
            <person name="Oyama R."/>
            <person name="Ravasi T."/>
            <person name="Lenhard B."/>
            <person name="Wells C."/>
            <person name="Kodzius R."/>
            <person name="Shimokawa K."/>
            <person name="Bajic V.B."/>
            <person name="Brenner S.E."/>
            <person name="Batalov S."/>
            <person name="Forrest A.R."/>
            <person name="Zavolan M."/>
            <person name="Davis M.J."/>
            <person name="Wilming L.G."/>
            <person name="Aidinis V."/>
            <person name="Allen J.E."/>
            <person name="Ambesi-Impiombato A."/>
            <person name="Apweiler R."/>
            <person name="Aturaliya R.N."/>
            <person name="Bailey T.L."/>
            <person name="Bansal M."/>
            <person name="Baxter L."/>
            <person name="Beisel K.W."/>
            <person name="Bersano T."/>
            <person name="Bono H."/>
            <person name="Chalk A.M."/>
            <person name="Chiu K.P."/>
            <person name="Choudhary V."/>
            <person name="Christoffels A."/>
            <person name="Clutterbuck D.R."/>
            <person name="Crowe M.L."/>
            <person name="Dalla E."/>
            <person name="Dalrymple B.P."/>
            <person name="de Bono B."/>
            <person name="Della Gatta G."/>
            <person name="di Bernardo D."/>
            <person name="Down T."/>
            <person name="Engstrom P."/>
            <person name="Fagiolini M."/>
            <person name="Faulkner G."/>
            <person name="Fletcher C.F."/>
            <person name="Fukushima T."/>
            <person name="Furuno M."/>
            <person name="Futaki S."/>
            <person name="Gariboldi M."/>
            <person name="Georgii-Hemming P."/>
            <person name="Gingeras T.R."/>
            <person name="Gojobori T."/>
            <person name="Green R.E."/>
            <person name="Gustincich S."/>
            <person name="Harbers M."/>
            <person name="Hayashi Y."/>
            <person name="Hensch T.K."/>
            <person name="Hirokawa N."/>
            <person name="Hill D."/>
            <person name="Huminiecki L."/>
            <person name="Iacono M."/>
            <person name="Ikeo K."/>
            <person name="Iwama A."/>
            <person name="Ishikawa T."/>
            <person name="Jakt M."/>
            <person name="Kanapin A."/>
            <person name="Katoh M."/>
            <person name="Kawasawa Y."/>
            <person name="Kelso J."/>
            <person name="Kitamura H."/>
            <person name="Kitano H."/>
            <person name="Kollias G."/>
            <person name="Krishnan S.P."/>
            <person name="Kruger A."/>
            <person name="Kummerfeld S.K."/>
            <person name="Kurochkin I.V."/>
            <person name="Lareau L.F."/>
            <person name="Lazarevic D."/>
            <person name="Lipovich L."/>
            <person name="Liu J."/>
            <person name="Liuni S."/>
            <person name="McWilliam S."/>
            <person name="Madan Babu M."/>
            <person name="Madera M."/>
            <person name="Marchionni L."/>
            <person name="Matsuda H."/>
            <person name="Matsuzawa S."/>
            <person name="Miki H."/>
            <person name="Mignone F."/>
            <person name="Miyake S."/>
            <person name="Morris K."/>
            <person name="Mottagui-Tabar S."/>
            <person name="Mulder N."/>
            <person name="Nakano N."/>
            <person name="Nakauchi H."/>
            <person name="Ng P."/>
            <person name="Nilsson R."/>
            <person name="Nishiguchi S."/>
            <person name="Nishikawa S."/>
            <person name="Nori F."/>
            <person name="Ohara O."/>
            <person name="Okazaki Y."/>
            <person name="Orlando V."/>
            <person name="Pang K.C."/>
            <person name="Pavan W.J."/>
            <person name="Pavesi G."/>
            <person name="Pesole G."/>
            <person name="Petrovsky N."/>
            <person name="Piazza S."/>
            <person name="Reed J."/>
            <person name="Reid J.F."/>
            <person name="Ring B.Z."/>
            <person name="Ringwald M."/>
            <person name="Rost B."/>
            <person name="Ruan Y."/>
            <person name="Salzberg S.L."/>
            <person name="Sandelin A."/>
            <person name="Schneider C."/>
            <person name="Schoenbach C."/>
            <person name="Sekiguchi K."/>
            <person name="Semple C.A."/>
            <person name="Seno S."/>
            <person name="Sessa L."/>
            <person name="Sheng Y."/>
            <person name="Shibata Y."/>
            <person name="Shimada H."/>
            <person name="Shimada K."/>
            <person name="Silva D."/>
            <person name="Sinclair B."/>
            <person name="Sperling S."/>
            <person name="Stupka E."/>
            <person name="Sugiura K."/>
            <person name="Sultana R."/>
            <person name="Takenaka Y."/>
            <person name="Taki K."/>
            <person name="Tammoja K."/>
            <person name="Tan S.L."/>
            <person name="Tang S."/>
            <person name="Taylor M.S."/>
            <person name="Tegner J."/>
            <person name="Teichmann S.A."/>
            <person name="Ueda H.R."/>
            <person name="van Nimwegen E."/>
            <person name="Verardo R."/>
            <person name="Wei C.L."/>
            <person name="Yagi K."/>
            <person name="Yamanishi H."/>
            <person name="Zabarovsky E."/>
            <person name="Zhu S."/>
            <person name="Zimmer A."/>
            <person name="Hide W."/>
            <person name="Bult C."/>
            <person name="Grimmond S.M."/>
            <person name="Teasdale R.D."/>
            <person name="Liu E.T."/>
            <person name="Brusic V."/>
            <person name="Quackenbush J."/>
            <person name="Wahlestedt C."/>
            <person name="Mattick J.S."/>
            <person name="Hume D.A."/>
            <person name="Kai C."/>
            <person name="Sasaki D."/>
            <person name="Tomaru Y."/>
            <person name="Fukuda S."/>
            <person name="Kanamori-Katayama M."/>
            <person name="Suzuki M."/>
            <person name="Aoki J."/>
            <person name="Arakawa T."/>
            <person name="Iida J."/>
            <person name="Imamura K."/>
            <person name="Itoh M."/>
            <person name="Kato T."/>
            <person name="Kawaji H."/>
            <person name="Kawagashira N."/>
            <person name="Kawashima T."/>
            <person name="Kojima M."/>
            <person name="Kondo S."/>
            <person name="Konno H."/>
            <person name="Nakano K."/>
            <person name="Ninomiya N."/>
            <person name="Nishio T."/>
            <person name="Okada M."/>
            <person name="Plessy C."/>
            <person name="Shibata K."/>
            <person name="Shiraki T."/>
            <person name="Suzuki S."/>
            <person name="Tagami M."/>
            <person name="Waki K."/>
            <person name="Watahiki A."/>
            <person name="Okamura-Oho Y."/>
            <person name="Suzuki H."/>
            <person name="Kawai J."/>
            <person name="Hayashizaki Y."/>
        </authorList>
    </citation>
    <scope>NUCLEOTIDE SEQUENCE [LARGE SCALE MRNA]</scope>
    <source>
        <strain>C57BL/6J</strain>
        <tissue>Testis</tissue>
    </source>
</reference>
<reference key="3">
    <citation type="journal article" date="2010" name="Cell">
        <title>A tissue-specific atlas of mouse protein phosphorylation and expression.</title>
        <authorList>
            <person name="Huttlin E.L."/>
            <person name="Jedrychowski M.P."/>
            <person name="Elias J.E."/>
            <person name="Goswami T."/>
            <person name="Rad R."/>
            <person name="Beausoleil S.A."/>
            <person name="Villen J."/>
            <person name="Haas W."/>
            <person name="Sowa M.E."/>
            <person name="Gygi S.P."/>
        </authorList>
    </citation>
    <scope>IDENTIFICATION BY MASS SPECTROMETRY [LARGE SCALE ANALYSIS]</scope>
    <source>
        <tissue>Testis</tissue>
    </source>
</reference>
<sequence length="1088" mass="124054">MALHFQSLAELEVLCTHLYVGTDLTERIEAEKALLELIDSPECLSKCQLLLEQGTTSYAQLLAATCLSKLVTRINPLPIEQRIDIRNYILNYVASQPKLAPFVIQALIQVIAKLTKLGWFEVQKDEFVFREIIADVKKFLQGTVEHCIIGVIILCELTQEMNLVDYSRPSAKHRKIATSFRDTSLKDILVLACSLLKQVLAKPLNLQDQDQQSLVMQVLKLVLSCLNFDFLGSSADESADDLCTVQIPTTWRTIFLEPETLDLFFNLYHSLPPLLSQLALSCLVQFASTRRSLFSSPERAKYLGNLIKGVKRILENPQGLSDPGNYHEFCRFLARLKTNYQLGELVLVKEYAEVIGLIANFTITSLQHWEFAPNSVHYLLTLWQRMVASVPFVKSAEPHLLDTYAPEITKAFITSRLESVAIVVRDNLEDPLDDTATVFQQLEQLCTVSRCEYEKTCTLLVQLFDQNAQNYQKLLHAAPGLAVDMAIQEGRLAWLIYLVGTVVGGRLTYTSTDEHDAMDGELSCRVFQLISLMDTRLPHCTNEKIELAVLWFLDQFRKTYVGDQLQRTSKVYARMSEVLGITDDNHVLETFMTKIVTNLKYWGRCEPVISRTLQFLSDLSVGYILLKKLVKIDAVKFMLKNHTSEHFPFLGISETYNVGDFRCRTTFYTALTRLLMVDLGEDEDEFENFMLPLTVSFETVLQIFNNNFKQEEVKRMLIGLARDLRGIAFALNTKTSYTMLFDWIYPAYLPVLQRAIERWYGEPACTTPILKLLAELMQNRSQRLNFDVSSPNGILLFREASKMICTYGNQILSLGSLSKDKIYPMKLKGISICYSALKSALCGNYVSFGVFKLYGDNHFDNVLQAFVKMLLSVSHSDLLQYRKLSQSYYPLLECLTQDHMSFITNLEPPVLLYVLTSLSEGLTTLDTVVSSSCCTSLDYMVTYLFKHIAKEGKKPLRSREAMQAGQRLLHFMQQNPDVLQQMMSVLMNTIVFEDCRNQWSVSRPLLGLILLNEKYFSELRASLINSQPLPKQEVLGQCFRNLMEGVEQNLSVKNRDRFTQNLSVFRRDVAEALRSDGHTDLSSLDMMS</sequence>
<feature type="initiator methionine" description="Removed" evidence="2">
    <location>
        <position position="1"/>
    </location>
</feature>
<feature type="chain" id="PRO_0000204719" description="Ran-binding protein 17">
    <location>
        <begin position="2"/>
        <end position="1088"/>
    </location>
</feature>
<feature type="modified residue" description="N-acetylalanine" evidence="2">
    <location>
        <position position="2"/>
    </location>
</feature>
<feature type="modified residue" description="Phosphoserine" evidence="2">
    <location>
        <position position="569"/>
    </location>
</feature>
<feature type="sequence conflict" description="In Ref. 2; BAB30322." evidence="4" ref="2">
    <original>V</original>
    <variation>I</variation>
    <location>
        <position position="128"/>
    </location>
</feature>
<feature type="sequence conflict" description="In Ref. 2; BAB30322." evidence="4" ref="2">
    <original>Q</original>
    <variation>K</variation>
    <location>
        <position position="469"/>
    </location>
</feature>
<organism>
    <name type="scientific">Mus musculus</name>
    <name type="common">Mouse</name>
    <dbReference type="NCBI Taxonomy" id="10090"/>
    <lineage>
        <taxon>Eukaryota</taxon>
        <taxon>Metazoa</taxon>
        <taxon>Chordata</taxon>
        <taxon>Craniata</taxon>
        <taxon>Vertebrata</taxon>
        <taxon>Euteleostomi</taxon>
        <taxon>Mammalia</taxon>
        <taxon>Eutheria</taxon>
        <taxon>Euarchontoglires</taxon>
        <taxon>Glires</taxon>
        <taxon>Rodentia</taxon>
        <taxon>Myomorpha</taxon>
        <taxon>Muroidea</taxon>
        <taxon>Muridae</taxon>
        <taxon>Murinae</taxon>
        <taxon>Mus</taxon>
        <taxon>Mus</taxon>
    </lineage>
</organism>
<accession>Q99NF8</accession>
<accession>Q9D4E3</accession>